<feature type="chain" id="PRO_1000115055" description="Small ribosomal subunit protein uS2">
    <location>
        <begin position="1"/>
        <end position="241"/>
    </location>
</feature>
<name>RS2_SALNS</name>
<comment type="similarity">
    <text evidence="1">Belongs to the universal ribosomal protein uS2 family.</text>
</comment>
<proteinExistence type="inferred from homology"/>
<evidence type="ECO:0000255" key="1">
    <source>
        <dbReference type="HAMAP-Rule" id="MF_00291"/>
    </source>
</evidence>
<evidence type="ECO:0000305" key="2"/>
<sequence>MATVSMRDMLKAGVHFGHQTRYWNPKMKPFIFGARNKVHIINLEKTVPMFNEALAELNKISARKGKILFVGTKRAASEAVKEAANSCDQFFVNHRWLGGMLTNWKTVRQSIKRLKDLETQSQDGTFEKLTKKEALMRTRELEKLENSLGGIKDMGGLPDALFVIDADHEHIAIKEANNLGIPVFAIVDTNSDPDGVDFVIPGNDDAIRAVSLYLGAVAATVREGRSQDLASQAEESFVEAE</sequence>
<gene>
    <name evidence="1" type="primary">rpsB</name>
    <name type="ordered locus">SNSL254_A0238</name>
</gene>
<organism>
    <name type="scientific">Salmonella newport (strain SL254)</name>
    <dbReference type="NCBI Taxonomy" id="423368"/>
    <lineage>
        <taxon>Bacteria</taxon>
        <taxon>Pseudomonadati</taxon>
        <taxon>Pseudomonadota</taxon>
        <taxon>Gammaproteobacteria</taxon>
        <taxon>Enterobacterales</taxon>
        <taxon>Enterobacteriaceae</taxon>
        <taxon>Salmonella</taxon>
    </lineage>
</organism>
<keyword id="KW-0687">Ribonucleoprotein</keyword>
<keyword id="KW-0689">Ribosomal protein</keyword>
<protein>
    <recommendedName>
        <fullName evidence="1">Small ribosomal subunit protein uS2</fullName>
    </recommendedName>
    <alternativeName>
        <fullName evidence="2">30S ribosomal protein S2</fullName>
    </alternativeName>
</protein>
<reference key="1">
    <citation type="journal article" date="2011" name="J. Bacteriol.">
        <title>Comparative genomics of 28 Salmonella enterica isolates: evidence for CRISPR-mediated adaptive sublineage evolution.</title>
        <authorList>
            <person name="Fricke W.F."/>
            <person name="Mammel M.K."/>
            <person name="McDermott P.F."/>
            <person name="Tartera C."/>
            <person name="White D.G."/>
            <person name="Leclerc J.E."/>
            <person name="Ravel J."/>
            <person name="Cebula T.A."/>
        </authorList>
    </citation>
    <scope>NUCLEOTIDE SEQUENCE [LARGE SCALE GENOMIC DNA]</scope>
    <source>
        <strain>SL254</strain>
    </source>
</reference>
<accession>B4SUZ8</accession>
<dbReference type="EMBL" id="CP001113">
    <property type="protein sequence ID" value="ACF61218.1"/>
    <property type="molecule type" value="Genomic_DNA"/>
</dbReference>
<dbReference type="RefSeq" id="WP_000246886.1">
    <property type="nucleotide sequence ID" value="NZ_CCMR01000003.1"/>
</dbReference>
<dbReference type="SMR" id="B4SUZ8"/>
<dbReference type="KEGG" id="see:SNSL254_A0238"/>
<dbReference type="HOGENOM" id="CLU_040318_1_0_6"/>
<dbReference type="Proteomes" id="UP000008824">
    <property type="component" value="Chromosome"/>
</dbReference>
<dbReference type="GO" id="GO:0022627">
    <property type="term" value="C:cytosolic small ribosomal subunit"/>
    <property type="evidence" value="ECO:0007669"/>
    <property type="project" value="TreeGrafter"/>
</dbReference>
<dbReference type="GO" id="GO:0003735">
    <property type="term" value="F:structural constituent of ribosome"/>
    <property type="evidence" value="ECO:0007669"/>
    <property type="project" value="InterPro"/>
</dbReference>
<dbReference type="GO" id="GO:0006412">
    <property type="term" value="P:translation"/>
    <property type="evidence" value="ECO:0007669"/>
    <property type="project" value="UniProtKB-UniRule"/>
</dbReference>
<dbReference type="CDD" id="cd01425">
    <property type="entry name" value="RPS2"/>
    <property type="match status" value="1"/>
</dbReference>
<dbReference type="FunFam" id="1.10.287.610:FF:000001">
    <property type="entry name" value="30S ribosomal protein S2"/>
    <property type="match status" value="1"/>
</dbReference>
<dbReference type="Gene3D" id="3.40.50.10490">
    <property type="entry name" value="Glucose-6-phosphate isomerase like protein, domain 1"/>
    <property type="match status" value="1"/>
</dbReference>
<dbReference type="Gene3D" id="1.10.287.610">
    <property type="entry name" value="Helix hairpin bin"/>
    <property type="match status" value="1"/>
</dbReference>
<dbReference type="HAMAP" id="MF_00291_B">
    <property type="entry name" value="Ribosomal_uS2_B"/>
    <property type="match status" value="1"/>
</dbReference>
<dbReference type="InterPro" id="IPR001865">
    <property type="entry name" value="Ribosomal_uS2"/>
</dbReference>
<dbReference type="InterPro" id="IPR005706">
    <property type="entry name" value="Ribosomal_uS2_bac/mit/plastid"/>
</dbReference>
<dbReference type="InterPro" id="IPR018130">
    <property type="entry name" value="Ribosomal_uS2_CS"/>
</dbReference>
<dbReference type="InterPro" id="IPR023591">
    <property type="entry name" value="Ribosomal_uS2_flav_dom_sf"/>
</dbReference>
<dbReference type="NCBIfam" id="TIGR01011">
    <property type="entry name" value="rpsB_bact"/>
    <property type="match status" value="1"/>
</dbReference>
<dbReference type="PANTHER" id="PTHR12534">
    <property type="entry name" value="30S RIBOSOMAL PROTEIN S2 PROKARYOTIC AND ORGANELLAR"/>
    <property type="match status" value="1"/>
</dbReference>
<dbReference type="PANTHER" id="PTHR12534:SF0">
    <property type="entry name" value="SMALL RIBOSOMAL SUBUNIT PROTEIN US2M"/>
    <property type="match status" value="1"/>
</dbReference>
<dbReference type="Pfam" id="PF00318">
    <property type="entry name" value="Ribosomal_S2"/>
    <property type="match status" value="1"/>
</dbReference>
<dbReference type="PRINTS" id="PR00395">
    <property type="entry name" value="RIBOSOMALS2"/>
</dbReference>
<dbReference type="SUPFAM" id="SSF52313">
    <property type="entry name" value="Ribosomal protein S2"/>
    <property type="match status" value="1"/>
</dbReference>
<dbReference type="PROSITE" id="PS00962">
    <property type="entry name" value="RIBOSOMAL_S2_1"/>
    <property type="match status" value="1"/>
</dbReference>
<dbReference type="PROSITE" id="PS00963">
    <property type="entry name" value="RIBOSOMAL_S2_2"/>
    <property type="match status" value="1"/>
</dbReference>